<protein>
    <recommendedName>
        <fullName>Endogenous retrovirus group K member 113 Gag polyprotein</fullName>
    </recommendedName>
    <alternativeName>
        <fullName>HERV-K113 Gag protein</fullName>
    </alternativeName>
    <alternativeName>
        <fullName>HERV-K_19p13.11 provirus ancestral Gag polyprotein</fullName>
        <shortName>Gag polyprotein</shortName>
    </alternativeName>
</protein>
<organism>
    <name type="scientific">Homo sapiens</name>
    <name type="common">Human</name>
    <dbReference type="NCBI Taxonomy" id="9606"/>
    <lineage>
        <taxon>Eukaryota</taxon>
        <taxon>Metazoa</taxon>
        <taxon>Chordata</taxon>
        <taxon>Craniata</taxon>
        <taxon>Vertebrata</taxon>
        <taxon>Euteleostomi</taxon>
        <taxon>Mammalia</taxon>
        <taxon>Eutheria</taxon>
        <taxon>Euarchontoglires</taxon>
        <taxon>Primates</taxon>
        <taxon>Haplorrhini</taxon>
        <taxon>Catarrhini</taxon>
        <taxon>Hominidae</taxon>
        <taxon>Homo</taxon>
    </lineage>
</organism>
<reference key="1">
    <citation type="journal article" date="2004" name="Nature">
        <title>The DNA sequence and biology of human chromosome 19.</title>
        <authorList>
            <person name="Grimwood J."/>
            <person name="Gordon L.A."/>
            <person name="Olsen A.S."/>
            <person name="Terry A."/>
            <person name="Schmutz J."/>
            <person name="Lamerdin J.E."/>
            <person name="Hellsten U."/>
            <person name="Goodstein D."/>
            <person name="Couronne O."/>
            <person name="Tran-Gyamfi M."/>
            <person name="Aerts A."/>
            <person name="Altherr M."/>
            <person name="Ashworth L."/>
            <person name="Bajorek E."/>
            <person name="Black S."/>
            <person name="Branscomb E."/>
            <person name="Caenepeel S."/>
            <person name="Carrano A.V."/>
            <person name="Caoile C."/>
            <person name="Chan Y.M."/>
            <person name="Christensen M."/>
            <person name="Cleland C.A."/>
            <person name="Copeland A."/>
            <person name="Dalin E."/>
            <person name="Dehal P."/>
            <person name="Denys M."/>
            <person name="Detter J.C."/>
            <person name="Escobar J."/>
            <person name="Flowers D."/>
            <person name="Fotopulos D."/>
            <person name="Garcia C."/>
            <person name="Georgescu A.M."/>
            <person name="Glavina T."/>
            <person name="Gomez M."/>
            <person name="Gonzales E."/>
            <person name="Groza M."/>
            <person name="Hammon N."/>
            <person name="Hawkins T."/>
            <person name="Haydu L."/>
            <person name="Ho I."/>
            <person name="Huang W."/>
            <person name="Israni S."/>
            <person name="Jett J."/>
            <person name="Kadner K."/>
            <person name="Kimball H."/>
            <person name="Kobayashi A."/>
            <person name="Larionov V."/>
            <person name="Leem S.-H."/>
            <person name="Lopez F."/>
            <person name="Lou Y."/>
            <person name="Lowry S."/>
            <person name="Malfatti S."/>
            <person name="Martinez D."/>
            <person name="McCready P.M."/>
            <person name="Medina C."/>
            <person name="Morgan J."/>
            <person name="Nelson K."/>
            <person name="Nolan M."/>
            <person name="Ovcharenko I."/>
            <person name="Pitluck S."/>
            <person name="Pollard M."/>
            <person name="Popkie A.P."/>
            <person name="Predki P."/>
            <person name="Quan G."/>
            <person name="Ramirez L."/>
            <person name="Rash S."/>
            <person name="Retterer J."/>
            <person name="Rodriguez A."/>
            <person name="Rogers S."/>
            <person name="Salamov A."/>
            <person name="Salazar A."/>
            <person name="She X."/>
            <person name="Smith D."/>
            <person name="Slezak T."/>
            <person name="Solovyev V."/>
            <person name="Thayer N."/>
            <person name="Tice H."/>
            <person name="Tsai M."/>
            <person name="Ustaszewska A."/>
            <person name="Vo N."/>
            <person name="Wagner M."/>
            <person name="Wheeler J."/>
            <person name="Wu K."/>
            <person name="Xie G."/>
            <person name="Yang J."/>
            <person name="Dubchak I."/>
            <person name="Furey T.S."/>
            <person name="DeJong P."/>
            <person name="Dickson M."/>
            <person name="Gordon D."/>
            <person name="Eichler E.E."/>
            <person name="Pennacchio L.A."/>
            <person name="Richardson P."/>
            <person name="Stubbs L."/>
            <person name="Rokhsar D.S."/>
            <person name="Myers R.M."/>
            <person name="Rubin E.M."/>
            <person name="Lucas S.M."/>
        </authorList>
    </citation>
    <scope>NUCLEOTIDE SEQUENCE [LARGE SCALE GENOMIC DNA]</scope>
</reference>
<reference key="2">
    <citation type="journal article" date="2001" name="Curr. Biol.">
        <title>Insertional polymorphisms of full-length endogenous retroviruses in humans.</title>
        <authorList>
            <person name="Turner G."/>
            <person name="Barbulescu M."/>
            <person name="Su M."/>
            <person name="Jensen-Seaman M.I."/>
            <person name="Kidd K.K."/>
            <person name="Lenz J."/>
        </authorList>
    </citation>
    <scope>IDENTIFICATION</scope>
</reference>
<reference key="3">
    <citation type="journal article" date="1995" name="J. Virol.">
        <title>Human endogenous retrovirus K10: expression of Gag protein and detection of antibodies in patients with seminomas.</title>
        <authorList>
            <person name="Sauter M."/>
            <person name="Schommer S."/>
            <person name="Kremmer E."/>
            <person name="Remberger K."/>
            <person name="Doelken G."/>
            <person name="Lemm I."/>
            <person name="Buck M."/>
            <person name="Best B."/>
            <person name="Neumann-Haefelin D."/>
            <person name="Mueller-Lantzsch N."/>
        </authorList>
    </citation>
    <scope>CHARACTERIZATION</scope>
</reference>
<comment type="function">
    <text>The products of the Gag polyproteins of infectious retroviruses perform highly complex orchestrated tasks during the assembly, budding, maturation, and infection stages of the viral replication cycle. During viral assembly, the proteins form membrane associations and self-associations that ultimately result in budding of an immature virion from the infected cell. Gag precursors also function during viral assembly to selectively bind and package two plus strands of genomic RNA. Endogenous Gag proteins may have kept, lost or modified their original function during evolution.</text>
</comment>
<comment type="subcellular location">
    <subcellularLocation>
        <location>Cell membrane</location>
        <topology>Lipid-anchor</topology>
    </subcellularLocation>
    <text evidence="1">Cytoplasmic membrane (in a transfection system).</text>
</comment>
<comment type="alternative products">
    <event type="ribosomal frameshifting"/>
    <isoform>
        <id>P62684-1</id>
        <name>1</name>
        <sequence type="displayed"/>
    </isoform>
    <text>This protein is synthesized as a Gag polypeptide and as a Gag-Pro-Pol polyprotein. The later is the precursor of the Pro and Pol proteins. It is thought, by similarity with type-B retroviruses, to be generated by -1 frameshifts occurring at the Gag-Pro and Pro-Pol genes boundaries.</text>
</comment>
<comment type="domain">
    <text>HERV-K Gag polyprotein contains regions homologous to the matrix (MA), capsid (CA) and nucleocapsid (NC) proteins from infectious retroviruses. Evidence suggests that HERV-K(HML-2) Gag polyprotein can be cleaved into mature MA, CA and NC under certain circumstances. However, the exact boundaries as well as the size of processed Gag proteins have not been precisely determined yet.</text>
</comment>
<comment type="PTM">
    <text evidence="1">Myristoylation is essential for retroviral assembly. Alteration of the glycine residue leads to a block in the budding of particles and an accumulation of Gag inside the cell (By similarity).</text>
</comment>
<comment type="PTM">
    <text evidence="5">Specific enzymatic cleavages may yield mature proteins.</text>
</comment>
<comment type="miscellaneous">
    <text>Insertional polymorphism. Provirus present in 29% of tested individuals.</text>
</comment>
<comment type="similarity">
    <text evidence="5">Belongs to the beta type-B retroviral Gag protein family. HERV class-II K(HML-2) gag subfamily.</text>
</comment>
<dbReference type="EMBL" id="AC112702">
    <property type="status" value="NOT_ANNOTATED_CDS"/>
    <property type="molecule type" value="Genomic_DNA"/>
</dbReference>
<dbReference type="SMR" id="P62684"/>
<dbReference type="BioMuta" id="HERVK_113"/>
<dbReference type="DMDM" id="50400278"/>
<dbReference type="jPOST" id="P62684"/>
<dbReference type="MassIVE" id="P62684"/>
<dbReference type="PeptideAtlas" id="P62684"/>
<dbReference type="neXtProt" id="NX_P62684"/>
<dbReference type="InParanoid" id="P62684"/>
<dbReference type="PhylomeDB" id="P62684"/>
<dbReference type="Pharos" id="P62684">
    <property type="development level" value="Tdark"/>
</dbReference>
<dbReference type="Proteomes" id="UP000005640">
    <property type="component" value="Unplaced"/>
</dbReference>
<dbReference type="RNAct" id="P62684">
    <property type="molecule type" value="protein"/>
</dbReference>
<dbReference type="GO" id="GO:0005886">
    <property type="term" value="C:plasma membrane"/>
    <property type="evidence" value="ECO:0007669"/>
    <property type="project" value="UniProtKB-SubCell"/>
</dbReference>
<dbReference type="GO" id="GO:0003676">
    <property type="term" value="F:nucleic acid binding"/>
    <property type="evidence" value="ECO:0007669"/>
    <property type="project" value="InterPro"/>
</dbReference>
<dbReference type="GO" id="GO:0005198">
    <property type="term" value="F:structural molecule activity"/>
    <property type="evidence" value="ECO:0007669"/>
    <property type="project" value="InterPro"/>
</dbReference>
<dbReference type="GO" id="GO:0008270">
    <property type="term" value="F:zinc ion binding"/>
    <property type="evidence" value="ECO:0007669"/>
    <property type="project" value="UniProtKB-KW"/>
</dbReference>
<dbReference type="GO" id="GO:0075523">
    <property type="term" value="P:viral translational frameshifting"/>
    <property type="evidence" value="ECO:0007669"/>
    <property type="project" value="UniProtKB-KW"/>
</dbReference>
<dbReference type="Gene3D" id="1.10.1200.30">
    <property type="match status" value="1"/>
</dbReference>
<dbReference type="Gene3D" id="1.10.375.10">
    <property type="entry name" value="Human Immunodeficiency Virus Type 1 Capsid Protein"/>
    <property type="match status" value="1"/>
</dbReference>
<dbReference type="Gene3D" id="1.10.150.490">
    <property type="entry name" value="Retroviral GAG p10 protein"/>
    <property type="match status" value="1"/>
</dbReference>
<dbReference type="Gene3D" id="4.10.60.10">
    <property type="entry name" value="Zinc finger, CCHC-type"/>
    <property type="match status" value="1"/>
</dbReference>
<dbReference type="InterPro" id="IPR003322">
    <property type="entry name" value="B_retro_matrix"/>
</dbReference>
<dbReference type="InterPro" id="IPR038124">
    <property type="entry name" value="B_retro_matrix_sf"/>
</dbReference>
<dbReference type="InterPro" id="IPR045345">
    <property type="entry name" value="Gag_p24_C"/>
</dbReference>
<dbReference type="InterPro" id="IPR050195">
    <property type="entry name" value="Primate_lentivir_Gag_pol-like"/>
</dbReference>
<dbReference type="InterPro" id="IPR008916">
    <property type="entry name" value="Retrov_capsid_C"/>
</dbReference>
<dbReference type="InterPro" id="IPR008919">
    <property type="entry name" value="Retrov_capsid_N"/>
</dbReference>
<dbReference type="InterPro" id="IPR010999">
    <property type="entry name" value="Retrovr_matrix"/>
</dbReference>
<dbReference type="InterPro" id="IPR001878">
    <property type="entry name" value="Znf_CCHC"/>
</dbReference>
<dbReference type="InterPro" id="IPR036875">
    <property type="entry name" value="Znf_CCHC_sf"/>
</dbReference>
<dbReference type="PANTHER" id="PTHR40389">
    <property type="entry name" value="ENDOGENOUS RETROVIRUS GROUP K MEMBER 24 GAG POLYPROTEIN-RELATED"/>
    <property type="match status" value="1"/>
</dbReference>
<dbReference type="PANTHER" id="PTHR40389:SF2">
    <property type="entry name" value="ENDOGENOUS RETROVIRUS GROUP K MEMBER 24 GAG POLYPROTEIN-RELATED"/>
    <property type="match status" value="1"/>
</dbReference>
<dbReference type="Pfam" id="PF02337">
    <property type="entry name" value="Gag_p10"/>
    <property type="match status" value="1"/>
</dbReference>
<dbReference type="Pfam" id="PF00607">
    <property type="entry name" value="Gag_p24"/>
    <property type="match status" value="1"/>
</dbReference>
<dbReference type="Pfam" id="PF19317">
    <property type="entry name" value="Gag_p24_C"/>
    <property type="match status" value="1"/>
</dbReference>
<dbReference type="Pfam" id="PF00098">
    <property type="entry name" value="zf-CCHC"/>
    <property type="match status" value="1"/>
</dbReference>
<dbReference type="Pfam" id="PF14787">
    <property type="entry name" value="zf-CCHC_5"/>
    <property type="match status" value="1"/>
</dbReference>
<dbReference type="SMART" id="SM00343">
    <property type="entry name" value="ZnF_C2HC"/>
    <property type="match status" value="2"/>
</dbReference>
<dbReference type="SUPFAM" id="SSF47836">
    <property type="entry name" value="Retroviral matrix proteins"/>
    <property type="match status" value="1"/>
</dbReference>
<dbReference type="SUPFAM" id="SSF47353">
    <property type="entry name" value="Retrovirus capsid dimerization domain-like"/>
    <property type="match status" value="1"/>
</dbReference>
<dbReference type="SUPFAM" id="SSF47943">
    <property type="entry name" value="Retrovirus capsid protein, N-terminal core domain"/>
    <property type="match status" value="1"/>
</dbReference>
<dbReference type="SUPFAM" id="SSF57756">
    <property type="entry name" value="Retrovirus zinc finger-like domains"/>
    <property type="match status" value="2"/>
</dbReference>
<dbReference type="PROSITE" id="PS50158">
    <property type="entry name" value="ZF_CCHC"/>
    <property type="match status" value="1"/>
</dbReference>
<evidence type="ECO:0000250" key="1"/>
<evidence type="ECO:0000255" key="2"/>
<evidence type="ECO:0000255" key="3">
    <source>
        <dbReference type="PROSITE-ProRule" id="PRU00047"/>
    </source>
</evidence>
<evidence type="ECO:0000256" key="4">
    <source>
        <dbReference type="SAM" id="MobiDB-lite"/>
    </source>
</evidence>
<evidence type="ECO:0000305" key="5"/>
<accession>P62684</accession>
<keyword id="KW-1003">Cell membrane</keyword>
<keyword id="KW-0895">ERV</keyword>
<keyword id="KW-0449">Lipoprotein</keyword>
<keyword id="KW-0472">Membrane</keyword>
<keyword id="KW-0479">Metal-binding</keyword>
<keyword id="KW-0519">Myristate</keyword>
<keyword id="KW-1185">Reference proteome</keyword>
<keyword id="KW-0677">Repeat</keyword>
<keyword id="KW-0688">Ribosomal frameshifting</keyword>
<keyword id="KW-0814">Transposable element</keyword>
<keyword id="KW-0862">Zinc</keyword>
<keyword id="KW-0863">Zinc-finger</keyword>
<gene>
    <name type="primary">HERVK_113</name>
</gene>
<name>GA113_HUMAN</name>
<feature type="initiator methionine" description="Removed" evidence="2">
    <location>
        <position position="1"/>
    </location>
</feature>
<feature type="chain" id="PRO_0000186748" description="Endogenous retrovirus group K member 113 Gag polyprotein">
    <location>
        <begin position="2"/>
        <end position="666"/>
    </location>
</feature>
<feature type="zinc finger region" description="CCHC-type 1" evidence="3">
    <location>
        <begin position="544"/>
        <end position="561"/>
    </location>
</feature>
<feature type="zinc finger region" description="CCHC-type 2" evidence="3">
    <location>
        <begin position="580"/>
        <end position="597"/>
    </location>
</feature>
<feature type="region of interest" description="Disordered" evidence="4">
    <location>
        <begin position="170"/>
        <end position="189"/>
    </location>
</feature>
<feature type="region of interest" description="Disordered" evidence="4">
    <location>
        <begin position="223"/>
        <end position="264"/>
    </location>
</feature>
<feature type="region of interest" description="Disordered" evidence="4">
    <location>
        <begin position="598"/>
        <end position="640"/>
    </location>
</feature>
<feature type="compositionally biased region" description="Pro residues" evidence="4">
    <location>
        <begin position="232"/>
        <end position="247"/>
    </location>
</feature>
<feature type="compositionally biased region" description="Polar residues" evidence="4">
    <location>
        <begin position="604"/>
        <end position="622"/>
    </location>
</feature>
<feature type="lipid moiety-binding region" description="N-myristoyl glycine" evidence="2">
    <location>
        <position position="2"/>
    </location>
</feature>
<sequence length="666" mass="74183">MGQTKSKIKSKYASYLSFIKILLKRGGVKVSTKNLIKLFQIIEQFCPWFPEQGTLDLKDWKRIGKELKQAGRKGNIIPLTVWNDWAIIKAALEPFQTEEDSVSVSDAPGSCIIDCNENTRKKSQKETESLHCEYVAEPVMAQSTQNVDYNQLQEVIYPETLKLEGKVPELVGPSESKPRGTSRLPAGQVPVTLQPQTQVKENKTQPPVAYQYWPPAELQYRPPLESQYGYPGMPPAPQGRAPYPQPPTRRLNPTAPPSRRGSELHEIIDKSRKEGDTEAWQFPVTLEPMPPGEGAQEGEPPTVEARYKSFSIKMLKDMKEGVKQYGPNSPYMRTLLDSIAHGHRLIPYDWEILAKSSLSPSQFLQFKTWWIDGVQEQVRRNRAANPPVNIDADQLLGIGQNWSTISQQALMQNEAIEQVRAICLRAWEKIQDPGSTCPSFNTVRQGSKEPYPDFVARLQDVAQKSIAIEKARKVIVELMAYENPNPECQSAIKPLKGKVPAGSDVISEYVKACDGMGGAMHKAMLMAQAITGVVLGGQVRTFGGKCYNCGQIGHLKKNCPVLNKQNITIQATTTGREPPDLCPRCKKGKHWASQCRSKFDKNGQPLSGNEQRGQPQAPQQTGAFPIQPFVPHGFQGQQPPLSQVFQGISQLPQYNNCPPPQAAVQQ</sequence>
<proteinExistence type="evidence at protein level"/>